<proteinExistence type="inferred from homology"/>
<evidence type="ECO:0000255" key="1">
    <source>
        <dbReference type="HAMAP-Rule" id="MF_00171"/>
    </source>
</evidence>
<dbReference type="EC" id="5.4.99.12" evidence="1"/>
<dbReference type="EMBL" id="AE001363">
    <property type="protein sequence ID" value="AAD18719.1"/>
    <property type="molecule type" value="Genomic_DNA"/>
</dbReference>
<dbReference type="EMBL" id="AE002161">
    <property type="protein sequence ID" value="AAF38045.1"/>
    <property type="molecule type" value="Genomic_DNA"/>
</dbReference>
<dbReference type="EMBL" id="BA000008">
    <property type="protein sequence ID" value="BAA98787.1"/>
    <property type="molecule type" value="Genomic_DNA"/>
</dbReference>
<dbReference type="EMBL" id="AE009440">
    <property type="protein sequence ID" value="AAP98533.1"/>
    <property type="molecule type" value="Genomic_DNA"/>
</dbReference>
<dbReference type="PIR" id="A72062">
    <property type="entry name" value="A72062"/>
</dbReference>
<dbReference type="PIR" id="A86563">
    <property type="entry name" value="A86563"/>
</dbReference>
<dbReference type="PIR" id="E81605">
    <property type="entry name" value="E81605"/>
</dbReference>
<dbReference type="RefSeq" id="NP_224776.1">
    <property type="nucleotide sequence ID" value="NC_000922.1"/>
</dbReference>
<dbReference type="RefSeq" id="WP_010883218.1">
    <property type="nucleotide sequence ID" value="NZ_LN847257.1"/>
</dbReference>
<dbReference type="RefSeq" id="WP_010891981.1">
    <property type="nucleotide sequence ID" value="NZ_LN846995.1"/>
</dbReference>
<dbReference type="SMR" id="Q9Z7X4"/>
<dbReference type="GeneID" id="45050624"/>
<dbReference type="KEGG" id="cpa:CP_0168"/>
<dbReference type="KEGG" id="cpj:truA"/>
<dbReference type="KEGG" id="cpn:CPn_0580"/>
<dbReference type="KEGG" id="cpt:CpB0605"/>
<dbReference type="PATRIC" id="fig|115713.3.peg.646"/>
<dbReference type="eggNOG" id="COG0101">
    <property type="taxonomic scope" value="Bacteria"/>
</dbReference>
<dbReference type="HOGENOM" id="CLU_014673_0_1_0"/>
<dbReference type="OrthoDB" id="9811823at2"/>
<dbReference type="Proteomes" id="UP000000583">
    <property type="component" value="Chromosome"/>
</dbReference>
<dbReference type="Proteomes" id="UP000000801">
    <property type="component" value="Chromosome"/>
</dbReference>
<dbReference type="GO" id="GO:0003723">
    <property type="term" value="F:RNA binding"/>
    <property type="evidence" value="ECO:0007669"/>
    <property type="project" value="InterPro"/>
</dbReference>
<dbReference type="GO" id="GO:0160147">
    <property type="term" value="F:tRNA pseudouridine(38-40) synthase activity"/>
    <property type="evidence" value="ECO:0007669"/>
    <property type="project" value="UniProtKB-EC"/>
</dbReference>
<dbReference type="GO" id="GO:0031119">
    <property type="term" value="P:tRNA pseudouridine synthesis"/>
    <property type="evidence" value="ECO:0007669"/>
    <property type="project" value="UniProtKB-UniRule"/>
</dbReference>
<dbReference type="CDD" id="cd02570">
    <property type="entry name" value="PseudoU_synth_EcTruA"/>
    <property type="match status" value="1"/>
</dbReference>
<dbReference type="FunFam" id="3.30.70.580:FF:000001">
    <property type="entry name" value="tRNA pseudouridine synthase A"/>
    <property type="match status" value="1"/>
</dbReference>
<dbReference type="Gene3D" id="3.30.70.660">
    <property type="entry name" value="Pseudouridine synthase I, catalytic domain, C-terminal subdomain"/>
    <property type="match status" value="1"/>
</dbReference>
<dbReference type="Gene3D" id="3.30.70.580">
    <property type="entry name" value="Pseudouridine synthase I, catalytic domain, N-terminal subdomain"/>
    <property type="match status" value="1"/>
</dbReference>
<dbReference type="HAMAP" id="MF_00171">
    <property type="entry name" value="TruA"/>
    <property type="match status" value="1"/>
</dbReference>
<dbReference type="InterPro" id="IPR020103">
    <property type="entry name" value="PsdUridine_synth_cat_dom_sf"/>
</dbReference>
<dbReference type="InterPro" id="IPR001406">
    <property type="entry name" value="PsdUridine_synth_TruA"/>
</dbReference>
<dbReference type="InterPro" id="IPR020097">
    <property type="entry name" value="PsdUridine_synth_TruA_a/b_dom"/>
</dbReference>
<dbReference type="InterPro" id="IPR020095">
    <property type="entry name" value="PsdUridine_synth_TruA_C"/>
</dbReference>
<dbReference type="InterPro" id="IPR020094">
    <property type="entry name" value="TruA/RsuA/RluB/E/F_N"/>
</dbReference>
<dbReference type="NCBIfam" id="TIGR00071">
    <property type="entry name" value="hisT_truA"/>
    <property type="match status" value="1"/>
</dbReference>
<dbReference type="PANTHER" id="PTHR11142">
    <property type="entry name" value="PSEUDOURIDYLATE SYNTHASE"/>
    <property type="match status" value="1"/>
</dbReference>
<dbReference type="PANTHER" id="PTHR11142:SF0">
    <property type="entry name" value="TRNA PSEUDOURIDINE SYNTHASE-LIKE 1"/>
    <property type="match status" value="1"/>
</dbReference>
<dbReference type="Pfam" id="PF01416">
    <property type="entry name" value="PseudoU_synth_1"/>
    <property type="match status" value="2"/>
</dbReference>
<dbReference type="PIRSF" id="PIRSF001430">
    <property type="entry name" value="tRNA_psdUrid_synth"/>
    <property type="match status" value="1"/>
</dbReference>
<dbReference type="SUPFAM" id="SSF55120">
    <property type="entry name" value="Pseudouridine synthase"/>
    <property type="match status" value="1"/>
</dbReference>
<organism>
    <name type="scientific">Chlamydia pneumoniae</name>
    <name type="common">Chlamydophila pneumoniae</name>
    <dbReference type="NCBI Taxonomy" id="83558"/>
    <lineage>
        <taxon>Bacteria</taxon>
        <taxon>Pseudomonadati</taxon>
        <taxon>Chlamydiota</taxon>
        <taxon>Chlamydiia</taxon>
        <taxon>Chlamydiales</taxon>
        <taxon>Chlamydiaceae</taxon>
        <taxon>Chlamydia/Chlamydophila group</taxon>
        <taxon>Chlamydia</taxon>
    </lineage>
</organism>
<name>TRUA_CHLPN</name>
<sequence>MTKVALLIAYQGTAYSGWQQQPNDLSIQEVIESSLKKITKTRTPLIASGRTDAGVHAYGQVAHFRAPDHPLFANANLTKKALNAILPKDIVIRDVALFDDNFHARYLTIAKEYRYSLSRLAKPLPWQRHFCYTPRHPFSTELMQEGANLLIGTHDFASFANHGRDYNSTVRTIYTLDIVDKGDSLSIICRGNGFLYKMVRNLVGALLDVGKGAYPPEHLLDILEQKNRREGPSAAPAYGLSLHHVCYSSPYNNFCCEQCSVSTSNEG</sequence>
<keyword id="KW-0413">Isomerase</keyword>
<keyword id="KW-0819">tRNA processing</keyword>
<accession>Q9Z7X4</accession>
<accession>Q9JS64</accession>
<feature type="chain" id="PRO_0000057359" description="tRNA pseudouridine synthase A">
    <location>
        <begin position="1"/>
        <end position="267"/>
    </location>
</feature>
<feature type="active site" description="Nucleophile" evidence="1">
    <location>
        <position position="52"/>
    </location>
</feature>
<feature type="binding site" evidence="1">
    <location>
        <position position="113"/>
    </location>
    <ligand>
        <name>substrate</name>
    </ligand>
</feature>
<feature type="sequence variant" description="In strain: CWL029 and TW-183.">
    <original>T</original>
    <variation>A</variation>
    <location>
        <position position="108"/>
    </location>
</feature>
<gene>
    <name evidence="1" type="primary">truA</name>
    <name type="ordered locus">CPn_0580</name>
    <name type="ordered locus">CP_0168</name>
    <name type="ordered locus">CpB0605</name>
</gene>
<reference key="1">
    <citation type="journal article" date="1999" name="Nat. Genet.">
        <title>Comparative genomes of Chlamydia pneumoniae and C. trachomatis.</title>
        <authorList>
            <person name="Kalman S."/>
            <person name="Mitchell W.P."/>
            <person name="Marathe R."/>
            <person name="Lammel C.J."/>
            <person name="Fan J."/>
            <person name="Hyman R.W."/>
            <person name="Olinger L."/>
            <person name="Grimwood J."/>
            <person name="Davis R.W."/>
            <person name="Stephens R.S."/>
        </authorList>
    </citation>
    <scope>NUCLEOTIDE SEQUENCE [LARGE SCALE GENOMIC DNA]</scope>
    <source>
        <strain>CWL029</strain>
    </source>
</reference>
<reference key="2">
    <citation type="journal article" date="2000" name="Nucleic Acids Res.">
        <title>Genome sequences of Chlamydia trachomatis MoPn and Chlamydia pneumoniae AR39.</title>
        <authorList>
            <person name="Read T.D."/>
            <person name="Brunham R.C."/>
            <person name="Shen C."/>
            <person name="Gill S.R."/>
            <person name="Heidelberg J.F."/>
            <person name="White O."/>
            <person name="Hickey E.K."/>
            <person name="Peterson J.D."/>
            <person name="Utterback T.R."/>
            <person name="Berry K.J."/>
            <person name="Bass S."/>
            <person name="Linher K.D."/>
            <person name="Weidman J.F."/>
            <person name="Khouri H.M."/>
            <person name="Craven B."/>
            <person name="Bowman C."/>
            <person name="Dodson R.J."/>
            <person name="Gwinn M.L."/>
            <person name="Nelson W.C."/>
            <person name="DeBoy R.T."/>
            <person name="Kolonay J.F."/>
            <person name="McClarty G."/>
            <person name="Salzberg S.L."/>
            <person name="Eisen J.A."/>
            <person name="Fraser C.M."/>
        </authorList>
    </citation>
    <scope>NUCLEOTIDE SEQUENCE [LARGE SCALE GENOMIC DNA]</scope>
    <source>
        <strain>AR39</strain>
    </source>
</reference>
<reference key="3">
    <citation type="journal article" date="2000" name="Nucleic Acids Res.">
        <title>Comparison of whole genome sequences of Chlamydia pneumoniae J138 from Japan and CWL029 from USA.</title>
        <authorList>
            <person name="Shirai M."/>
            <person name="Hirakawa H."/>
            <person name="Kimoto M."/>
            <person name="Tabuchi M."/>
            <person name="Kishi F."/>
            <person name="Ouchi K."/>
            <person name="Shiba T."/>
            <person name="Ishii K."/>
            <person name="Hattori M."/>
            <person name="Kuhara S."/>
            <person name="Nakazawa T."/>
        </authorList>
    </citation>
    <scope>NUCLEOTIDE SEQUENCE [LARGE SCALE GENOMIC DNA]</scope>
    <source>
        <strain>J138</strain>
    </source>
</reference>
<reference key="4">
    <citation type="submission" date="2002-05" db="EMBL/GenBank/DDBJ databases">
        <title>The genome sequence of Chlamydia pneumoniae TW183 and comparison with other Chlamydia strains based on whole genome sequence analysis.</title>
        <authorList>
            <person name="Geng M.M."/>
            <person name="Schuhmacher A."/>
            <person name="Muehldorfer I."/>
            <person name="Bensch K.W."/>
            <person name="Schaefer K.P."/>
            <person name="Schneider S."/>
            <person name="Pohl T."/>
            <person name="Essig A."/>
            <person name="Marre R."/>
            <person name="Melchers K."/>
        </authorList>
    </citation>
    <scope>NUCLEOTIDE SEQUENCE [LARGE SCALE GENOMIC DNA]</scope>
    <source>
        <strain>TW-183</strain>
    </source>
</reference>
<protein>
    <recommendedName>
        <fullName evidence="1">tRNA pseudouridine synthase A</fullName>
        <ecNumber evidence="1">5.4.99.12</ecNumber>
    </recommendedName>
    <alternativeName>
        <fullName evidence="1">tRNA pseudouridine(38-40) synthase</fullName>
    </alternativeName>
    <alternativeName>
        <fullName evidence="1">tRNA pseudouridylate synthase I</fullName>
    </alternativeName>
    <alternativeName>
        <fullName evidence="1">tRNA-uridine isomerase I</fullName>
    </alternativeName>
</protein>
<comment type="function">
    <text evidence="1">Formation of pseudouridine at positions 38, 39 and 40 in the anticodon stem and loop of transfer RNAs.</text>
</comment>
<comment type="catalytic activity">
    <reaction evidence="1">
        <text>uridine(38/39/40) in tRNA = pseudouridine(38/39/40) in tRNA</text>
        <dbReference type="Rhea" id="RHEA:22376"/>
        <dbReference type="Rhea" id="RHEA-COMP:10085"/>
        <dbReference type="Rhea" id="RHEA-COMP:10087"/>
        <dbReference type="ChEBI" id="CHEBI:65314"/>
        <dbReference type="ChEBI" id="CHEBI:65315"/>
        <dbReference type="EC" id="5.4.99.12"/>
    </reaction>
</comment>
<comment type="subunit">
    <text evidence="1">Homodimer.</text>
</comment>
<comment type="similarity">
    <text evidence="1">Belongs to the tRNA pseudouridine synthase TruA family.</text>
</comment>